<organism>
    <name type="scientific">Clostridium botulinum (strain Kyoto / Type A2)</name>
    <dbReference type="NCBI Taxonomy" id="536232"/>
    <lineage>
        <taxon>Bacteria</taxon>
        <taxon>Bacillati</taxon>
        <taxon>Bacillota</taxon>
        <taxon>Clostridia</taxon>
        <taxon>Eubacteriales</taxon>
        <taxon>Clostridiaceae</taxon>
        <taxon>Clostridium</taxon>
    </lineage>
</organism>
<protein>
    <recommendedName>
        <fullName evidence="1">Type III pantothenate kinase</fullName>
        <ecNumber evidence="1">2.7.1.33</ecNumber>
    </recommendedName>
    <alternativeName>
        <fullName evidence="1">PanK-III</fullName>
    </alternativeName>
    <alternativeName>
        <fullName evidence="1">Pantothenic acid kinase</fullName>
    </alternativeName>
</protein>
<evidence type="ECO:0000255" key="1">
    <source>
        <dbReference type="HAMAP-Rule" id="MF_01274"/>
    </source>
</evidence>
<feature type="chain" id="PRO_1000165191" description="Type III pantothenate kinase">
    <location>
        <begin position="1"/>
        <end position="258"/>
    </location>
</feature>
<feature type="active site" description="Proton acceptor" evidence="1">
    <location>
        <position position="109"/>
    </location>
</feature>
<feature type="binding site" evidence="1">
    <location>
        <begin position="6"/>
        <end position="13"/>
    </location>
    <ligand>
        <name>ATP</name>
        <dbReference type="ChEBI" id="CHEBI:30616"/>
    </ligand>
</feature>
<feature type="binding site" evidence="1">
    <location>
        <position position="100"/>
    </location>
    <ligand>
        <name>substrate</name>
    </ligand>
</feature>
<feature type="binding site" evidence="1">
    <location>
        <begin position="107"/>
        <end position="110"/>
    </location>
    <ligand>
        <name>substrate</name>
    </ligand>
</feature>
<feature type="binding site" evidence="1">
    <location>
        <position position="129"/>
    </location>
    <ligand>
        <name>K(+)</name>
        <dbReference type="ChEBI" id="CHEBI:29103"/>
    </ligand>
</feature>
<feature type="binding site" evidence="1">
    <location>
        <position position="132"/>
    </location>
    <ligand>
        <name>ATP</name>
        <dbReference type="ChEBI" id="CHEBI:30616"/>
    </ligand>
</feature>
<feature type="binding site" evidence="1">
    <location>
        <position position="184"/>
    </location>
    <ligand>
        <name>substrate</name>
    </ligand>
</feature>
<comment type="function">
    <text evidence="1">Catalyzes the phosphorylation of pantothenate (Pan), the first step in CoA biosynthesis.</text>
</comment>
<comment type="catalytic activity">
    <reaction evidence="1">
        <text>(R)-pantothenate + ATP = (R)-4'-phosphopantothenate + ADP + H(+)</text>
        <dbReference type="Rhea" id="RHEA:16373"/>
        <dbReference type="ChEBI" id="CHEBI:10986"/>
        <dbReference type="ChEBI" id="CHEBI:15378"/>
        <dbReference type="ChEBI" id="CHEBI:29032"/>
        <dbReference type="ChEBI" id="CHEBI:30616"/>
        <dbReference type="ChEBI" id="CHEBI:456216"/>
        <dbReference type="EC" id="2.7.1.33"/>
    </reaction>
</comment>
<comment type="cofactor">
    <cofactor evidence="1">
        <name>NH4(+)</name>
        <dbReference type="ChEBI" id="CHEBI:28938"/>
    </cofactor>
    <cofactor evidence="1">
        <name>K(+)</name>
        <dbReference type="ChEBI" id="CHEBI:29103"/>
    </cofactor>
    <text evidence="1">A monovalent cation. Ammonium or potassium.</text>
</comment>
<comment type="pathway">
    <text evidence="1">Cofactor biosynthesis; coenzyme A biosynthesis; CoA from (R)-pantothenate: step 1/5.</text>
</comment>
<comment type="subunit">
    <text evidence="1">Homodimer.</text>
</comment>
<comment type="subcellular location">
    <subcellularLocation>
        <location evidence="1">Cytoplasm</location>
    </subcellularLocation>
</comment>
<comment type="similarity">
    <text evidence="1">Belongs to the type III pantothenate kinase family.</text>
</comment>
<reference key="1">
    <citation type="submission" date="2008-10" db="EMBL/GenBank/DDBJ databases">
        <title>Genome sequence of Clostridium botulinum A2 Kyoto.</title>
        <authorList>
            <person name="Shrivastava S."/>
            <person name="Brinkac L.M."/>
            <person name="Brown J.L."/>
            <person name="Bruce D."/>
            <person name="Detter C.C."/>
            <person name="Johnson E.A."/>
            <person name="Munk C.A."/>
            <person name="Smith L.A."/>
            <person name="Smith T.J."/>
            <person name="Sutton G."/>
            <person name="Brettin T.S."/>
        </authorList>
    </citation>
    <scope>NUCLEOTIDE SEQUENCE [LARGE SCALE GENOMIC DNA]</scope>
    <source>
        <strain>Kyoto / Type A2</strain>
    </source>
</reference>
<gene>
    <name evidence="1" type="primary">coaX</name>
    <name type="ordered locus">CLM_4008</name>
</gene>
<accession>C1FNC9</accession>
<dbReference type="EC" id="2.7.1.33" evidence="1"/>
<dbReference type="EMBL" id="CP001581">
    <property type="protein sequence ID" value="ACO85735.1"/>
    <property type="molecule type" value="Genomic_DNA"/>
</dbReference>
<dbReference type="RefSeq" id="WP_003359441.1">
    <property type="nucleotide sequence ID" value="NC_012563.1"/>
</dbReference>
<dbReference type="SMR" id="C1FNC9"/>
<dbReference type="KEGG" id="cby:CLM_4008"/>
<dbReference type="eggNOG" id="COG1521">
    <property type="taxonomic scope" value="Bacteria"/>
</dbReference>
<dbReference type="HOGENOM" id="CLU_066627_1_0_9"/>
<dbReference type="UniPathway" id="UPA00241">
    <property type="reaction ID" value="UER00352"/>
</dbReference>
<dbReference type="Proteomes" id="UP000001374">
    <property type="component" value="Chromosome"/>
</dbReference>
<dbReference type="GO" id="GO:0005737">
    <property type="term" value="C:cytoplasm"/>
    <property type="evidence" value="ECO:0007669"/>
    <property type="project" value="UniProtKB-SubCell"/>
</dbReference>
<dbReference type="GO" id="GO:0005524">
    <property type="term" value="F:ATP binding"/>
    <property type="evidence" value="ECO:0007669"/>
    <property type="project" value="UniProtKB-UniRule"/>
</dbReference>
<dbReference type="GO" id="GO:0046872">
    <property type="term" value="F:metal ion binding"/>
    <property type="evidence" value="ECO:0007669"/>
    <property type="project" value="UniProtKB-KW"/>
</dbReference>
<dbReference type="GO" id="GO:0004594">
    <property type="term" value="F:pantothenate kinase activity"/>
    <property type="evidence" value="ECO:0007669"/>
    <property type="project" value="UniProtKB-UniRule"/>
</dbReference>
<dbReference type="GO" id="GO:0015937">
    <property type="term" value="P:coenzyme A biosynthetic process"/>
    <property type="evidence" value="ECO:0007669"/>
    <property type="project" value="UniProtKB-UniRule"/>
</dbReference>
<dbReference type="CDD" id="cd24015">
    <property type="entry name" value="ASKHA_NBD_PanK-III"/>
    <property type="match status" value="1"/>
</dbReference>
<dbReference type="Gene3D" id="3.30.420.40">
    <property type="match status" value="2"/>
</dbReference>
<dbReference type="HAMAP" id="MF_01274">
    <property type="entry name" value="Pantothen_kinase_3"/>
    <property type="match status" value="1"/>
</dbReference>
<dbReference type="InterPro" id="IPR043129">
    <property type="entry name" value="ATPase_NBD"/>
</dbReference>
<dbReference type="InterPro" id="IPR004619">
    <property type="entry name" value="Type_III_PanK"/>
</dbReference>
<dbReference type="NCBIfam" id="TIGR00671">
    <property type="entry name" value="baf"/>
    <property type="match status" value="1"/>
</dbReference>
<dbReference type="NCBIfam" id="NF009847">
    <property type="entry name" value="PRK13318.1-5"/>
    <property type="match status" value="1"/>
</dbReference>
<dbReference type="NCBIfam" id="NF009848">
    <property type="entry name" value="PRK13318.1-6"/>
    <property type="match status" value="1"/>
</dbReference>
<dbReference type="NCBIfam" id="NF009855">
    <property type="entry name" value="PRK13321.1"/>
    <property type="match status" value="1"/>
</dbReference>
<dbReference type="PANTHER" id="PTHR34265">
    <property type="entry name" value="TYPE III PANTOTHENATE KINASE"/>
    <property type="match status" value="1"/>
</dbReference>
<dbReference type="PANTHER" id="PTHR34265:SF1">
    <property type="entry name" value="TYPE III PANTOTHENATE KINASE"/>
    <property type="match status" value="1"/>
</dbReference>
<dbReference type="Pfam" id="PF03309">
    <property type="entry name" value="Pan_kinase"/>
    <property type="match status" value="1"/>
</dbReference>
<dbReference type="SUPFAM" id="SSF53067">
    <property type="entry name" value="Actin-like ATPase domain"/>
    <property type="match status" value="2"/>
</dbReference>
<name>COAX_CLOBJ</name>
<keyword id="KW-0067">ATP-binding</keyword>
<keyword id="KW-0173">Coenzyme A biosynthesis</keyword>
<keyword id="KW-0963">Cytoplasm</keyword>
<keyword id="KW-0418">Kinase</keyword>
<keyword id="KW-0479">Metal-binding</keyword>
<keyword id="KW-0547">Nucleotide-binding</keyword>
<keyword id="KW-0630">Potassium</keyword>
<keyword id="KW-0808">Transferase</keyword>
<sequence>MILVLDVGNTNIVLGIYKNKELIANWRLATDNKRTADEYGIQVIELFSHNNLSFSDIEGVIISSVVPNIMYSLEHMISKYFNIKPIIVGPGVKTGINIKYDNPKEVGADRIVNAVAAHEIYKKPLIIIDFGTATTFCAVTKEANYLGGTICPGIKISSDALFDKAAKLPRVELVKTPGVICKNTVASIQSGIIYGYAGQVDYIVSKMKKEMMDLGEEEPFVVATGGFAKLISEESKSIDEINAILTLEGLRVIYEKNK</sequence>
<proteinExistence type="inferred from homology"/>